<feature type="signal peptide" evidence="5 6">
    <location>
        <begin position="1"/>
        <end position="16"/>
    </location>
</feature>
<feature type="chain" id="PRO_0000419222" description="Acidic phospholipase A2 daboiatoxin A chain">
    <location>
        <begin position="17"/>
        <end position="138"/>
    </location>
</feature>
<feature type="active site" evidence="1">
    <location>
        <position position="63"/>
    </location>
</feature>
<feature type="active site" evidence="1">
    <location>
        <position position="105"/>
    </location>
</feature>
<feature type="binding site" evidence="1">
    <location>
        <position position="43"/>
    </location>
    <ligand>
        <name>Ca(2+)</name>
        <dbReference type="ChEBI" id="CHEBI:29108"/>
    </ligand>
</feature>
<feature type="binding site" evidence="1">
    <location>
        <position position="45"/>
    </location>
    <ligand>
        <name>Ca(2+)</name>
        <dbReference type="ChEBI" id="CHEBI:29108"/>
    </ligand>
</feature>
<feature type="binding site" evidence="1">
    <location>
        <position position="47"/>
    </location>
    <ligand>
        <name>Ca(2+)</name>
        <dbReference type="ChEBI" id="CHEBI:29108"/>
    </ligand>
</feature>
<feature type="binding site" evidence="1">
    <location>
        <position position="64"/>
    </location>
    <ligand>
        <name>Ca(2+)</name>
        <dbReference type="ChEBI" id="CHEBI:29108"/>
    </ligand>
</feature>
<feature type="disulfide bond" evidence="4">
    <location>
        <begin position="42"/>
        <end position="131"/>
    </location>
</feature>
<feature type="disulfide bond" evidence="4">
    <location>
        <begin position="44"/>
        <end position="60"/>
    </location>
</feature>
<feature type="disulfide bond" evidence="4">
    <location>
        <begin position="59"/>
        <end position="111"/>
    </location>
</feature>
<feature type="disulfide bond" evidence="1">
    <location>
        <begin position="65"/>
        <end position="138"/>
    </location>
</feature>
<feature type="disulfide bond" evidence="4">
    <location>
        <begin position="66"/>
        <end position="104"/>
    </location>
</feature>
<feature type="disulfide bond" evidence="4">
    <location>
        <begin position="73"/>
        <end position="97"/>
    </location>
</feature>
<feature type="disulfide bond" evidence="4">
    <location>
        <begin position="91"/>
        <end position="102"/>
    </location>
</feature>
<feature type="helix" evidence="9">
    <location>
        <begin position="18"/>
        <end position="25"/>
    </location>
</feature>
<feature type="turn" evidence="9">
    <location>
        <begin position="26"/>
        <end position="28"/>
    </location>
</feature>
<feature type="turn" evidence="9">
    <location>
        <begin position="34"/>
        <end position="39"/>
    </location>
</feature>
<feature type="turn" evidence="9">
    <location>
        <begin position="41"/>
        <end position="44"/>
    </location>
</feature>
<feature type="helix" evidence="9">
    <location>
        <begin position="55"/>
        <end position="69"/>
    </location>
</feature>
<feature type="turn" evidence="9">
    <location>
        <begin position="75"/>
        <end position="77"/>
    </location>
</feature>
<feature type="strand" evidence="9">
    <location>
        <begin position="82"/>
        <end position="84"/>
    </location>
</feature>
<feature type="strand" evidence="9">
    <location>
        <begin position="89"/>
        <end position="91"/>
    </location>
</feature>
<feature type="helix" evidence="9">
    <location>
        <begin position="98"/>
        <end position="111"/>
    </location>
</feature>
<feature type="turn" evidence="9">
    <location>
        <begin position="112"/>
        <end position="118"/>
    </location>
</feature>
<feature type="strand" evidence="9">
    <location>
        <begin position="123"/>
        <end position="125"/>
    </location>
</feature>
<feature type="turn" evidence="9">
    <location>
        <begin position="129"/>
        <end position="131"/>
    </location>
</feature>
<evidence type="ECO:0000250" key="1"/>
<evidence type="ECO:0000255" key="2">
    <source>
        <dbReference type="PROSITE-ProRule" id="PRU10035"/>
    </source>
</evidence>
<evidence type="ECO:0000255" key="3">
    <source>
        <dbReference type="PROSITE-ProRule" id="PRU10036"/>
    </source>
</evidence>
<evidence type="ECO:0000269" key="4">
    <source>
    </source>
</evidence>
<evidence type="ECO:0000269" key="5">
    <source>
    </source>
</evidence>
<evidence type="ECO:0000269" key="6">
    <source>
    </source>
</evidence>
<evidence type="ECO:0000305" key="7"/>
<evidence type="ECO:0000305" key="8">
    <source>
    </source>
</evidence>
<evidence type="ECO:0007829" key="9">
    <source>
        <dbReference type="PDB" id="2H4C"/>
    </source>
</evidence>
<organism>
    <name type="scientific">Daboia siamensis</name>
    <name type="common">Eastern Russel's viper</name>
    <name type="synonym">Daboia russelii siamensis</name>
    <dbReference type="NCBI Taxonomy" id="343250"/>
    <lineage>
        <taxon>Eukaryota</taxon>
        <taxon>Metazoa</taxon>
        <taxon>Chordata</taxon>
        <taxon>Craniata</taxon>
        <taxon>Vertebrata</taxon>
        <taxon>Euteleostomi</taxon>
        <taxon>Lepidosauria</taxon>
        <taxon>Squamata</taxon>
        <taxon>Bifurcata</taxon>
        <taxon>Unidentata</taxon>
        <taxon>Episquamata</taxon>
        <taxon>Toxicofera</taxon>
        <taxon>Serpentes</taxon>
        <taxon>Colubroidea</taxon>
        <taxon>Viperidae</taxon>
        <taxon>Viperinae</taxon>
        <taxon>Daboia</taxon>
    </lineage>
</organism>
<keyword id="KW-0002">3D-structure</keyword>
<keyword id="KW-0106">Calcium</keyword>
<keyword id="KW-0903">Direct protein sequencing</keyword>
<keyword id="KW-1015">Disulfide bond</keyword>
<keyword id="KW-0378">Hydrolase</keyword>
<keyword id="KW-0442">Lipid degradation</keyword>
<keyword id="KW-0443">Lipid metabolism</keyword>
<keyword id="KW-0479">Metal-binding</keyword>
<keyword id="KW-0959">Myotoxin</keyword>
<keyword id="KW-0528">Neurotoxin</keyword>
<keyword id="KW-0593">Phospholipase A2 inhibitor</keyword>
<keyword id="KW-0638">Presynaptic neurotoxin</keyword>
<keyword id="KW-0964">Secreted</keyword>
<keyword id="KW-0732">Signal</keyword>
<keyword id="KW-0800">Toxin</keyword>
<dbReference type="EC" id="3.1.1.4"/>
<dbReference type="EMBL" id="AY303800">
    <property type="protein sequence ID" value="AAP58959.1"/>
    <property type="molecule type" value="mRNA"/>
</dbReference>
<dbReference type="EMBL" id="DQ090655">
    <property type="protein sequence ID" value="AAZ53177.1"/>
    <property type="molecule type" value="mRNA"/>
</dbReference>
<dbReference type="PDB" id="2H4C">
    <property type="method" value="X-ray"/>
    <property type="resolution" value="2.60 A"/>
    <property type="chains" value="A/C/E/G=17-138"/>
</dbReference>
<dbReference type="PDBsum" id="2H4C"/>
<dbReference type="SMR" id="Q7T2R1"/>
<dbReference type="EvolutionaryTrace" id="Q7T2R1"/>
<dbReference type="GO" id="GO:0005576">
    <property type="term" value="C:extracellular region"/>
    <property type="evidence" value="ECO:0007669"/>
    <property type="project" value="UniProtKB-SubCell"/>
</dbReference>
<dbReference type="GO" id="GO:0005509">
    <property type="term" value="F:calcium ion binding"/>
    <property type="evidence" value="ECO:0007669"/>
    <property type="project" value="InterPro"/>
</dbReference>
<dbReference type="GO" id="GO:0047498">
    <property type="term" value="F:calcium-dependent phospholipase A2 activity"/>
    <property type="evidence" value="ECO:0007669"/>
    <property type="project" value="TreeGrafter"/>
</dbReference>
<dbReference type="GO" id="GO:0019834">
    <property type="term" value="F:phospholipase A2 inhibitor activity"/>
    <property type="evidence" value="ECO:0007669"/>
    <property type="project" value="UniProtKB-KW"/>
</dbReference>
<dbReference type="GO" id="GO:0005543">
    <property type="term" value="F:phospholipid binding"/>
    <property type="evidence" value="ECO:0007669"/>
    <property type="project" value="TreeGrafter"/>
</dbReference>
<dbReference type="GO" id="GO:0090729">
    <property type="term" value="F:toxin activity"/>
    <property type="evidence" value="ECO:0007669"/>
    <property type="project" value="UniProtKB-KW"/>
</dbReference>
<dbReference type="GO" id="GO:0050482">
    <property type="term" value="P:arachidonate secretion"/>
    <property type="evidence" value="ECO:0007669"/>
    <property type="project" value="InterPro"/>
</dbReference>
<dbReference type="GO" id="GO:0016042">
    <property type="term" value="P:lipid catabolic process"/>
    <property type="evidence" value="ECO:0007669"/>
    <property type="project" value="UniProtKB-KW"/>
</dbReference>
<dbReference type="GO" id="GO:0042130">
    <property type="term" value="P:negative regulation of T cell proliferation"/>
    <property type="evidence" value="ECO:0007669"/>
    <property type="project" value="TreeGrafter"/>
</dbReference>
<dbReference type="GO" id="GO:0006644">
    <property type="term" value="P:phospholipid metabolic process"/>
    <property type="evidence" value="ECO:0007669"/>
    <property type="project" value="InterPro"/>
</dbReference>
<dbReference type="CDD" id="cd00125">
    <property type="entry name" value="PLA2c"/>
    <property type="match status" value="1"/>
</dbReference>
<dbReference type="FunFam" id="1.20.90.10:FF:000001">
    <property type="entry name" value="Basic phospholipase A2 homolog"/>
    <property type="match status" value="1"/>
</dbReference>
<dbReference type="Gene3D" id="1.20.90.10">
    <property type="entry name" value="Phospholipase A2 domain"/>
    <property type="match status" value="1"/>
</dbReference>
<dbReference type="InterPro" id="IPR001211">
    <property type="entry name" value="PLipase_A2"/>
</dbReference>
<dbReference type="InterPro" id="IPR033112">
    <property type="entry name" value="PLipase_A2_Asp_AS"/>
</dbReference>
<dbReference type="InterPro" id="IPR016090">
    <property type="entry name" value="PLipase_A2_dom"/>
</dbReference>
<dbReference type="InterPro" id="IPR036444">
    <property type="entry name" value="PLipase_A2_dom_sf"/>
</dbReference>
<dbReference type="InterPro" id="IPR033113">
    <property type="entry name" value="PLipase_A2_His_AS"/>
</dbReference>
<dbReference type="PANTHER" id="PTHR11716">
    <property type="entry name" value="PHOSPHOLIPASE A2 FAMILY MEMBER"/>
    <property type="match status" value="1"/>
</dbReference>
<dbReference type="PANTHER" id="PTHR11716:SF9">
    <property type="entry name" value="PHOSPHOLIPASE A2, MEMBRANE ASSOCIATED"/>
    <property type="match status" value="1"/>
</dbReference>
<dbReference type="Pfam" id="PF00068">
    <property type="entry name" value="Phospholip_A2_1"/>
    <property type="match status" value="1"/>
</dbReference>
<dbReference type="PRINTS" id="PR00389">
    <property type="entry name" value="PHPHLIPASEA2"/>
</dbReference>
<dbReference type="SMART" id="SM00085">
    <property type="entry name" value="PA2c"/>
    <property type="match status" value="1"/>
</dbReference>
<dbReference type="SUPFAM" id="SSF48619">
    <property type="entry name" value="Phospholipase A2, PLA2"/>
    <property type="match status" value="1"/>
</dbReference>
<dbReference type="PROSITE" id="PS00119">
    <property type="entry name" value="PA2_ASP"/>
    <property type="match status" value="1"/>
</dbReference>
<dbReference type="PROSITE" id="PS00118">
    <property type="entry name" value="PA2_HIS"/>
    <property type="match status" value="1"/>
</dbReference>
<sequence length="138" mass="15395">MRTLWIMAVCLIGVEGNFFQFAEMIVKMTGKEAVHSYAIYGCYCGWGGQGKPQDATDRCCFVHDCCYGTVNDCNPKMATYSYSFENGDIVCGDNNLCLKTVCECDRAAAICLGQNVNTYDKNYENYAISHCTEESEQC</sequence>
<comment type="function">
    <text>Heterodimer (A and B chains): phospholipase A2 that acts as a presynaptic neurotoxin and shows a PLA2 activity of 1377 umol/min/mg. In vivo, induces edema and produces neurotoxic symptoms in mice. Also exhibits indirect hemolysis, a strong myonecrotic activity and cytotoxicity. PLA2 catalyzes the calcium-dependent hydrolysis of the 2-acyl groups in 3-sn-phosphoglycerides.</text>
</comment>
<comment type="function">
    <text>Monomer: Snake venom phospholipase A2 (PLA2) that shows a PLA2 activity of 578 umol/min/mg.</text>
</comment>
<comment type="catalytic activity">
    <reaction evidence="2 3">
        <text>a 1,2-diacyl-sn-glycero-3-phosphocholine + H2O = a 1-acyl-sn-glycero-3-phosphocholine + a fatty acid + H(+)</text>
        <dbReference type="Rhea" id="RHEA:15801"/>
        <dbReference type="ChEBI" id="CHEBI:15377"/>
        <dbReference type="ChEBI" id="CHEBI:15378"/>
        <dbReference type="ChEBI" id="CHEBI:28868"/>
        <dbReference type="ChEBI" id="CHEBI:57643"/>
        <dbReference type="ChEBI" id="CHEBI:58168"/>
        <dbReference type="EC" id="3.1.1.4"/>
    </reaction>
</comment>
<comment type="cofactor">
    <cofactor evidence="1">
        <name>Ca(2+)</name>
        <dbReference type="ChEBI" id="CHEBI:29108"/>
    </cofactor>
    <text evidence="1">Binds 1 Ca(2+) ion.</text>
</comment>
<comment type="subunit">
    <text evidence="4">Heterodimer of A and B chain; non-covalently linked. The acidic protein (B chain) has phospholipase A2 activity and the A chain weakly inhibits the B chain enzymatic activity but potentiates its lethal potency.</text>
</comment>
<comment type="subcellular location">
    <subcellularLocation>
        <location evidence="6">Secreted</location>
    </subcellularLocation>
</comment>
<comment type="tissue specificity">
    <text evidence="8">Expressed by the venom gland.</text>
</comment>
<comment type="mass spectrometry" mass="13607.0" method="Electrospray" evidence="5">
    <text>in Dsm-a1.</text>
</comment>
<comment type="mass spectrometry" mass="13812.0" method="Electrospray" evidence="5">
    <text>in Dsm-a1' which has only its protein sequence AA 17-27 sequenced.</text>
</comment>
<comment type="toxic dose">
    <text evidence="4">Monomer: DbTx-A alone is non-lethal, even at doses as high as 2 ug/g.</text>
</comment>
<comment type="toxic dose">
    <text evidence="4">Heterodimer (A and B chains): LD(50) is estimated to be about 0.1 ug/g by intraperitoneal injection into mice.</text>
</comment>
<comment type="miscellaneous">
    <text evidence="8">Negative results: does not provoke hemorrhage.</text>
</comment>
<comment type="similarity">
    <text evidence="7">Belongs to the phospholipase A2 family. Group II subfamily. D49 sub-subfamily.</text>
</comment>
<protein>
    <recommendedName>
        <fullName>Acidic phospholipase A2 daboiatoxin A chain</fullName>
        <shortName>DbTx-A</shortName>
        <shortName>svPLA2</shortName>
        <ecNumber>3.1.1.4</ecNumber>
    </recommendedName>
    <alternativeName>
        <fullName>Phospholipase A2 Dsm-a1</fullName>
    </alternativeName>
    <alternativeName>
        <fullName>Phospholipase A2 inhibitor</fullName>
    </alternativeName>
    <alternativeName>
        <fullName>Phospholipase A2-III</fullName>
    </alternativeName>
</protein>
<name>PA2AA_DABSI</name>
<reference key="1">
    <citation type="journal article" date="2007" name="Biochim. Biophys. Acta">
        <title>Venom phospholipases of Russell's vipers from Myanmar and eastern India--cloning, characterization and phylogeographic analysis.</title>
        <authorList>
            <person name="Tsai I.-H."/>
            <person name="Tsai H.-Y."/>
            <person name="Wang Y.-M."/>
            <person name="Pe T."/>
            <person name="Warrell D.-A."/>
        </authorList>
    </citation>
    <scope>NUCLEOTIDE SEQUENCE [MRNA]</scope>
    <scope>PROTEIN SEQUENCE OF 17-27</scope>
    <scope>FUNCTION</scope>
    <scope>MASS SPECTROMETRY</scope>
    <source>
        <strain>Myanmar</strain>
        <tissue>Venom</tissue>
        <tissue>Venom gland</tissue>
    </source>
</reference>
<reference key="2">
    <citation type="submission" date="2003-05" db="EMBL/GenBank/DDBJ databases">
        <title>Biochemical and pharmacological properties of three phospholipase A2s from Vipera russelli siamensis venom.</title>
        <authorList>
            <person name="Jia Y.-H."/>
            <person name="Jin Y."/>
            <person name="Chen R.-Q."/>
            <person name="Li D.-S."/>
            <person name="Wang W.-Y."/>
            <person name="Xiong Y.-L."/>
        </authorList>
    </citation>
    <scope>NUCLEOTIDE SEQUENCE [MRNA]</scope>
</reference>
<reference key="3">
    <citation type="journal article" date="1995" name="Toxicon">
        <title>A major lethal factor of the venom of Burmese Russell's viper (Daboia russelli siamensis): isolation, N-terminal sequencing and biological activities of daboiatoxin.</title>
        <authorList>
            <person name="Thwin M.M."/>
            <person name="Gopalakrishnakone P."/>
            <person name="Yuen R."/>
            <person name="Tan C.H."/>
        </authorList>
    </citation>
    <scope>PROTEIN SEQUENCE OF 17-36</scope>
    <scope>FUNCTION</scope>
    <scope>SUBCELLULAR LOCATION</scope>
    <source>
        <tissue>Venom</tissue>
    </source>
</reference>
<reference key="4">
    <citation type="journal article" date="1996" name="Toxicon">
        <title>Synaptosomal binding of 125I-labelled daboiatoxin, a new PLA2 neurotoxin from the venom of Daboia russelli siamensis.</title>
        <authorList>
            <person name="Thwin M.M."/>
            <person name="Gopalakrishnakone P."/>
            <person name="Yuen R."/>
            <person name="Tan C.H."/>
        </authorList>
    </citation>
    <scope>FUNCTION</scope>
</reference>
<reference key="5">
    <citation type="journal article" date="2007" name="Acta Crystallogr. D">
        <title>Structural and pharmacological comparison of daboiatoxin from Daboia russelli siamensis with viperotoxin F and vipoxin from other vipers.</title>
        <authorList>
            <person name="Gopalan G."/>
            <person name="Thwin M.M."/>
            <person name="Gopalakrishnakone P."/>
            <person name="Swaminathan K."/>
        </authorList>
    </citation>
    <scope>X-RAY CRYSTALLOGRAPHY (2.60 ANGSTROMS) OF 17-138</scope>
    <scope>DISULFIDE BOND</scope>
    <scope>SUBUNIT</scope>
    <scope>TOXIC DOSE</scope>
    <source>
        <tissue>Venom</tissue>
    </source>
</reference>
<accession>Q7T2R1</accession>
<proteinExistence type="evidence at protein level"/>